<accession>Q9Z8M1</accession>
<accession>Q9JRX1</accession>
<comment type="function">
    <text evidence="1">One of the essential components for the initiation of protein synthesis. Protects formylmethionyl-tRNA from spontaneous hydrolysis and promotes its binding to the 30S ribosomal subunits. Also involved in the hydrolysis of GTP during the formation of the 70S ribosomal complex (By similarity).</text>
</comment>
<comment type="subcellular location">
    <subcellularLocation>
        <location evidence="1">Cytoplasm</location>
    </subcellularLocation>
</comment>
<comment type="similarity">
    <text evidence="3">Belongs to the TRAFAC class translation factor GTPase superfamily. Classic translation factor GTPase family. IF-2 subfamily.</text>
</comment>
<comment type="sequence caution" evidence="3">
    <conflict type="erroneous initiation">
        <sequence resource="EMBL-CDS" id="AAP98260"/>
    </conflict>
</comment>
<organism>
    <name type="scientific">Chlamydia pneumoniae</name>
    <name type="common">Chlamydophila pneumoniae</name>
    <dbReference type="NCBI Taxonomy" id="83558"/>
    <lineage>
        <taxon>Bacteria</taxon>
        <taxon>Pseudomonadati</taxon>
        <taxon>Chlamydiota</taxon>
        <taxon>Chlamydiia</taxon>
        <taxon>Chlamydiales</taxon>
        <taxon>Chlamydiaceae</taxon>
        <taxon>Chlamydia/Chlamydophila group</taxon>
        <taxon>Chlamydia</taxon>
    </lineage>
</organism>
<name>IF2_CHLPN</name>
<gene>
    <name type="primary">infB</name>
    <name type="ordered locus">CPn_0317</name>
    <name type="ordered locus">CP_0440</name>
    <name type="ordered locus">CpB0327</name>
</gene>
<dbReference type="EMBL" id="AE001363">
    <property type="protein sequence ID" value="AAD18466.1"/>
    <property type="molecule type" value="Genomic_DNA"/>
</dbReference>
<dbReference type="EMBL" id="AE002161">
    <property type="protein sequence ID" value="AAF38279.1"/>
    <property type="molecule type" value="Genomic_DNA"/>
</dbReference>
<dbReference type="EMBL" id="BA000008">
    <property type="protein sequence ID" value="BAA98527.1"/>
    <property type="molecule type" value="Genomic_DNA"/>
</dbReference>
<dbReference type="EMBL" id="AE009440">
    <property type="protein sequence ID" value="AAP98260.1"/>
    <property type="status" value="ALT_INIT"/>
    <property type="molecule type" value="Genomic_DNA"/>
</dbReference>
<dbReference type="PIR" id="E81576">
    <property type="entry name" value="E81576"/>
</dbReference>
<dbReference type="PIR" id="E86530">
    <property type="entry name" value="E86530"/>
</dbReference>
<dbReference type="PIR" id="F72093">
    <property type="entry name" value="F72093"/>
</dbReference>
<dbReference type="RefSeq" id="NP_224522.1">
    <property type="nucleotide sequence ID" value="NC_000922.1"/>
</dbReference>
<dbReference type="RefSeq" id="WP_010892069.1">
    <property type="nucleotide sequence ID" value="NZ_LN846995.1"/>
</dbReference>
<dbReference type="SMR" id="Q9Z8M1"/>
<dbReference type="STRING" id="406984.CPK_ORF00825"/>
<dbReference type="KEGG" id="cpa:CP_0440"/>
<dbReference type="KEGG" id="cpj:infB"/>
<dbReference type="KEGG" id="cpn:CPn_0317"/>
<dbReference type="KEGG" id="cpt:CpB0327"/>
<dbReference type="PATRIC" id="fig|115713.3.peg.351"/>
<dbReference type="eggNOG" id="COG0532">
    <property type="taxonomic scope" value="Bacteria"/>
</dbReference>
<dbReference type="HOGENOM" id="CLU_006301_3_0_0"/>
<dbReference type="OrthoDB" id="9811804at2"/>
<dbReference type="Proteomes" id="UP000000583">
    <property type="component" value="Chromosome"/>
</dbReference>
<dbReference type="Proteomes" id="UP000000801">
    <property type="component" value="Chromosome"/>
</dbReference>
<dbReference type="GO" id="GO:0005829">
    <property type="term" value="C:cytosol"/>
    <property type="evidence" value="ECO:0007669"/>
    <property type="project" value="TreeGrafter"/>
</dbReference>
<dbReference type="GO" id="GO:0005525">
    <property type="term" value="F:GTP binding"/>
    <property type="evidence" value="ECO:0007669"/>
    <property type="project" value="UniProtKB-KW"/>
</dbReference>
<dbReference type="GO" id="GO:0003924">
    <property type="term" value="F:GTPase activity"/>
    <property type="evidence" value="ECO:0007669"/>
    <property type="project" value="UniProtKB-UniRule"/>
</dbReference>
<dbReference type="GO" id="GO:0003743">
    <property type="term" value="F:translation initiation factor activity"/>
    <property type="evidence" value="ECO:0007669"/>
    <property type="project" value="UniProtKB-UniRule"/>
</dbReference>
<dbReference type="CDD" id="cd01887">
    <property type="entry name" value="IF2_eIF5B"/>
    <property type="match status" value="1"/>
</dbReference>
<dbReference type="CDD" id="cd03702">
    <property type="entry name" value="IF2_mtIF2_II"/>
    <property type="match status" value="1"/>
</dbReference>
<dbReference type="CDD" id="cd03692">
    <property type="entry name" value="mtIF2_IVc"/>
    <property type="match status" value="1"/>
</dbReference>
<dbReference type="FunFam" id="2.40.30.10:FF:000008">
    <property type="entry name" value="Translation initiation factor IF-2"/>
    <property type="match status" value="1"/>
</dbReference>
<dbReference type="FunFam" id="2.40.30.10:FF:000054">
    <property type="entry name" value="Translation initiation factor IF-2"/>
    <property type="match status" value="1"/>
</dbReference>
<dbReference type="FunFam" id="3.40.50.10050:FF:000001">
    <property type="entry name" value="Translation initiation factor IF-2"/>
    <property type="match status" value="1"/>
</dbReference>
<dbReference type="FunFam" id="3.40.50.300:FF:000019">
    <property type="entry name" value="Translation initiation factor IF-2"/>
    <property type="match status" value="1"/>
</dbReference>
<dbReference type="Gene3D" id="3.40.50.300">
    <property type="entry name" value="P-loop containing nucleotide triphosphate hydrolases"/>
    <property type="match status" value="1"/>
</dbReference>
<dbReference type="Gene3D" id="2.40.30.10">
    <property type="entry name" value="Translation factors"/>
    <property type="match status" value="2"/>
</dbReference>
<dbReference type="Gene3D" id="3.40.50.10050">
    <property type="entry name" value="Translation initiation factor IF- 2, domain 3"/>
    <property type="match status" value="1"/>
</dbReference>
<dbReference type="HAMAP" id="MF_00100_B">
    <property type="entry name" value="IF_2_B"/>
    <property type="match status" value="1"/>
</dbReference>
<dbReference type="InterPro" id="IPR053905">
    <property type="entry name" value="EF-G-like_DII"/>
</dbReference>
<dbReference type="InterPro" id="IPR004161">
    <property type="entry name" value="EFTu-like_2"/>
</dbReference>
<dbReference type="InterPro" id="IPR044145">
    <property type="entry name" value="IF2_II"/>
</dbReference>
<dbReference type="InterPro" id="IPR006847">
    <property type="entry name" value="IF2_N"/>
</dbReference>
<dbReference type="InterPro" id="IPR027417">
    <property type="entry name" value="P-loop_NTPase"/>
</dbReference>
<dbReference type="InterPro" id="IPR005225">
    <property type="entry name" value="Small_GTP-bd"/>
</dbReference>
<dbReference type="InterPro" id="IPR000795">
    <property type="entry name" value="T_Tr_GTP-bd_dom"/>
</dbReference>
<dbReference type="InterPro" id="IPR000178">
    <property type="entry name" value="TF_IF2_bacterial-like"/>
</dbReference>
<dbReference type="InterPro" id="IPR015760">
    <property type="entry name" value="TIF_IF2"/>
</dbReference>
<dbReference type="InterPro" id="IPR023115">
    <property type="entry name" value="TIF_IF2_dom3"/>
</dbReference>
<dbReference type="InterPro" id="IPR036925">
    <property type="entry name" value="TIF_IF2_dom3_sf"/>
</dbReference>
<dbReference type="InterPro" id="IPR009000">
    <property type="entry name" value="Transl_B-barrel_sf"/>
</dbReference>
<dbReference type="NCBIfam" id="TIGR00487">
    <property type="entry name" value="IF-2"/>
    <property type="match status" value="1"/>
</dbReference>
<dbReference type="NCBIfam" id="TIGR00231">
    <property type="entry name" value="small_GTP"/>
    <property type="match status" value="1"/>
</dbReference>
<dbReference type="PANTHER" id="PTHR43381:SF5">
    <property type="entry name" value="TR-TYPE G DOMAIN-CONTAINING PROTEIN"/>
    <property type="match status" value="1"/>
</dbReference>
<dbReference type="PANTHER" id="PTHR43381">
    <property type="entry name" value="TRANSLATION INITIATION FACTOR IF-2-RELATED"/>
    <property type="match status" value="1"/>
</dbReference>
<dbReference type="Pfam" id="PF22042">
    <property type="entry name" value="EF-G_D2"/>
    <property type="match status" value="1"/>
</dbReference>
<dbReference type="Pfam" id="PF00009">
    <property type="entry name" value="GTP_EFTU"/>
    <property type="match status" value="1"/>
</dbReference>
<dbReference type="Pfam" id="PF03144">
    <property type="entry name" value="GTP_EFTU_D2"/>
    <property type="match status" value="1"/>
</dbReference>
<dbReference type="Pfam" id="PF11987">
    <property type="entry name" value="IF-2"/>
    <property type="match status" value="1"/>
</dbReference>
<dbReference type="Pfam" id="PF04760">
    <property type="entry name" value="IF2_N"/>
    <property type="match status" value="1"/>
</dbReference>
<dbReference type="SUPFAM" id="SSF52156">
    <property type="entry name" value="Initiation factor IF2/eIF5b, domain 3"/>
    <property type="match status" value="1"/>
</dbReference>
<dbReference type="SUPFAM" id="SSF52540">
    <property type="entry name" value="P-loop containing nucleoside triphosphate hydrolases"/>
    <property type="match status" value="1"/>
</dbReference>
<dbReference type="SUPFAM" id="SSF50447">
    <property type="entry name" value="Translation proteins"/>
    <property type="match status" value="2"/>
</dbReference>
<dbReference type="PROSITE" id="PS51722">
    <property type="entry name" value="G_TR_2"/>
    <property type="match status" value="1"/>
</dbReference>
<dbReference type="PROSITE" id="PS01176">
    <property type="entry name" value="IF2"/>
    <property type="match status" value="1"/>
</dbReference>
<sequence length="890" mass="97105">MEKVKLTKNLKLKIKNAQLTKAAGLDKLKQKLAQAGSSEAKSSSEKPSAKEKSVKVALAATSTPTASAEQASPESTSRRIRAKNRSSFSSSEEESSAHIPVDTSEPAPVSIADPEPELEVVDEVCDESPEVHPVAEVLPEQPVLPETPPQEKELEPKPVKPAEPKSVVMIKSKFGPTGKHINHLLAKTFKAPAKEEKVVAGSKSTKPVASDKTGKPGTSEGGEQNNREKQFNPANRSPASGPKRDAGKKNLTDFRDRSKKSDESLKAFTGRDRYGLNEGGEEDRWRKKRVYKPKKHYDEASIQRPTHIKISLPITVKDLATEMKLKASEVIQKLFIHGMTYVVNDILDSETAVQFIGLEFGCTIDIDYSEQDKLCLSNDTVRDEIQSTDPSKLVIRSPIVAFMGHVDHGKTTLIDSLRKSNVAATEAGAITQHMGAFCCSTPVGDITILDTPGHEAFSAMRARGAEVCDIVVLVVAGDEGIKEQTLEAIEHAKAADIAIVVAINKCDKPNFNSETIYRQLSEINLLPEAWGGSTVTVNTSAKTGEGLSELLEMLALQAEVLELKADPSARARGLVIESELHKGLGPVATVLIQNGSLKLGEALVFNDCYGKVKTMHNEHNELMKEAGPSIPVLITGLSDIPKAGDPFFVVKNEKTARDIIEARSAGQQRFALQQKKRPNFDSMLQNKKTLKLMIKADVQGSIEALVSSISKIKSEKVDVEILTNSVGEISESDIRLAAASKAVLIGFHTGIESHAEPLIKSLGVRVELFTVIYHAIDAIKEIMTSLLDPIAEEKDEGSAEIKEIFRSSQVGSIYGCIVTEGIMTRNHKVRVLRNKEILWKGTLSSLKRVKEDVKEVRKGLECGILLEGYQQAQIGDVLQCYEVIYHPQKL</sequence>
<reference key="1">
    <citation type="journal article" date="1999" name="Nat. Genet.">
        <title>Comparative genomes of Chlamydia pneumoniae and C. trachomatis.</title>
        <authorList>
            <person name="Kalman S."/>
            <person name="Mitchell W.P."/>
            <person name="Marathe R."/>
            <person name="Lammel C.J."/>
            <person name="Fan J."/>
            <person name="Hyman R.W."/>
            <person name="Olinger L."/>
            <person name="Grimwood J."/>
            <person name="Davis R.W."/>
            <person name="Stephens R.S."/>
        </authorList>
    </citation>
    <scope>NUCLEOTIDE SEQUENCE [LARGE SCALE GENOMIC DNA]</scope>
    <source>
        <strain>CWL029</strain>
    </source>
</reference>
<reference key="2">
    <citation type="journal article" date="2000" name="Nucleic Acids Res.">
        <title>Genome sequences of Chlamydia trachomatis MoPn and Chlamydia pneumoniae AR39.</title>
        <authorList>
            <person name="Read T.D."/>
            <person name="Brunham R.C."/>
            <person name="Shen C."/>
            <person name="Gill S.R."/>
            <person name="Heidelberg J.F."/>
            <person name="White O."/>
            <person name="Hickey E.K."/>
            <person name="Peterson J.D."/>
            <person name="Utterback T.R."/>
            <person name="Berry K.J."/>
            <person name="Bass S."/>
            <person name="Linher K.D."/>
            <person name="Weidman J.F."/>
            <person name="Khouri H.M."/>
            <person name="Craven B."/>
            <person name="Bowman C."/>
            <person name="Dodson R.J."/>
            <person name="Gwinn M.L."/>
            <person name="Nelson W.C."/>
            <person name="DeBoy R.T."/>
            <person name="Kolonay J.F."/>
            <person name="McClarty G."/>
            <person name="Salzberg S.L."/>
            <person name="Eisen J.A."/>
            <person name="Fraser C.M."/>
        </authorList>
    </citation>
    <scope>NUCLEOTIDE SEQUENCE [LARGE SCALE GENOMIC DNA]</scope>
    <source>
        <strain>AR39</strain>
    </source>
</reference>
<reference key="3">
    <citation type="journal article" date="2000" name="Nucleic Acids Res.">
        <title>Comparison of whole genome sequences of Chlamydia pneumoniae J138 from Japan and CWL029 from USA.</title>
        <authorList>
            <person name="Shirai M."/>
            <person name="Hirakawa H."/>
            <person name="Kimoto M."/>
            <person name="Tabuchi M."/>
            <person name="Kishi F."/>
            <person name="Ouchi K."/>
            <person name="Shiba T."/>
            <person name="Ishii K."/>
            <person name="Hattori M."/>
            <person name="Kuhara S."/>
            <person name="Nakazawa T."/>
        </authorList>
    </citation>
    <scope>NUCLEOTIDE SEQUENCE [LARGE SCALE GENOMIC DNA]</scope>
    <source>
        <strain>J138</strain>
    </source>
</reference>
<reference key="4">
    <citation type="submission" date="2002-05" db="EMBL/GenBank/DDBJ databases">
        <title>The genome sequence of Chlamydia pneumoniae TW183 and comparison with other Chlamydia strains based on whole genome sequence analysis.</title>
        <authorList>
            <person name="Geng M.M."/>
            <person name="Schuhmacher A."/>
            <person name="Muehldorfer I."/>
            <person name="Bensch K.W."/>
            <person name="Schaefer K.P."/>
            <person name="Schneider S."/>
            <person name="Pohl T."/>
            <person name="Essig A."/>
            <person name="Marre R."/>
            <person name="Melchers K."/>
        </authorList>
    </citation>
    <scope>NUCLEOTIDE SEQUENCE [LARGE SCALE GENOMIC DNA]</scope>
    <source>
        <strain>TW-183</strain>
    </source>
</reference>
<keyword id="KW-0963">Cytoplasm</keyword>
<keyword id="KW-0342">GTP-binding</keyword>
<keyword id="KW-0396">Initiation factor</keyword>
<keyword id="KW-0547">Nucleotide-binding</keyword>
<keyword id="KW-0648">Protein biosynthesis</keyword>
<proteinExistence type="inferred from homology"/>
<protein>
    <recommendedName>
        <fullName>Translation initiation factor IF-2</fullName>
    </recommendedName>
</protein>
<feature type="chain" id="PRO_0000137189" description="Translation initiation factor IF-2">
    <location>
        <begin position="1"/>
        <end position="890"/>
    </location>
</feature>
<feature type="domain" description="tr-type G">
    <location>
        <begin position="395"/>
        <end position="564"/>
    </location>
</feature>
<feature type="region of interest" description="Disordered" evidence="2">
    <location>
        <begin position="31"/>
        <end position="164"/>
    </location>
</feature>
<feature type="region of interest" description="Disordered" evidence="2">
    <location>
        <begin position="189"/>
        <end position="266"/>
    </location>
</feature>
<feature type="region of interest" description="G1" evidence="1">
    <location>
        <begin position="404"/>
        <end position="411"/>
    </location>
</feature>
<feature type="region of interest" description="G2" evidence="1">
    <location>
        <begin position="429"/>
        <end position="433"/>
    </location>
</feature>
<feature type="region of interest" description="G3" evidence="1">
    <location>
        <begin position="450"/>
        <end position="453"/>
    </location>
</feature>
<feature type="region of interest" description="G4" evidence="1">
    <location>
        <begin position="504"/>
        <end position="507"/>
    </location>
</feature>
<feature type="region of interest" description="G5" evidence="1">
    <location>
        <begin position="540"/>
        <end position="542"/>
    </location>
</feature>
<feature type="compositionally biased region" description="Basic and acidic residues" evidence="2">
    <location>
        <begin position="42"/>
        <end position="54"/>
    </location>
</feature>
<feature type="compositionally biased region" description="Low complexity" evidence="2">
    <location>
        <begin position="55"/>
        <end position="72"/>
    </location>
</feature>
<feature type="compositionally biased region" description="Acidic residues" evidence="2">
    <location>
        <begin position="114"/>
        <end position="128"/>
    </location>
</feature>
<feature type="compositionally biased region" description="Basic and acidic residues" evidence="2">
    <location>
        <begin position="149"/>
        <end position="163"/>
    </location>
</feature>
<feature type="compositionally biased region" description="Basic and acidic residues" evidence="2">
    <location>
        <begin position="242"/>
        <end position="266"/>
    </location>
</feature>
<feature type="binding site" evidence="1">
    <location>
        <begin position="404"/>
        <end position="411"/>
    </location>
    <ligand>
        <name>GTP</name>
        <dbReference type="ChEBI" id="CHEBI:37565"/>
    </ligand>
</feature>
<feature type="binding site" evidence="1">
    <location>
        <begin position="450"/>
        <end position="454"/>
    </location>
    <ligand>
        <name>GTP</name>
        <dbReference type="ChEBI" id="CHEBI:37565"/>
    </ligand>
</feature>
<feature type="binding site" evidence="1">
    <location>
        <begin position="504"/>
        <end position="507"/>
    </location>
    <ligand>
        <name>GTP</name>
        <dbReference type="ChEBI" id="CHEBI:37565"/>
    </ligand>
</feature>
<feature type="sequence variant" description="In strain: CWL029 and TW-183.">
    <original>T</original>
    <variation>A</variation>
    <location>
        <position position="321"/>
    </location>
</feature>
<evidence type="ECO:0000250" key="1"/>
<evidence type="ECO:0000256" key="2">
    <source>
        <dbReference type="SAM" id="MobiDB-lite"/>
    </source>
</evidence>
<evidence type="ECO:0000305" key="3"/>